<name>RIMM_HELPJ</name>
<sequence length="181" mass="20395">MLLVGRIGKSVGLNGGLKLHLESDFPECLKKGVKVSVAPINAFSCASSFKDYVIHSYEHAKNLLFLETIRTPEKAKELTNLGLFMSEAESKKLCVLKEGEFFYCDLIGLSVVEGNEILGKVIEIQRISQTDYFMVETTRSLVEKGLAKIFLIPYRDFYIQEILLQDKKITTHNAKTLLENS</sequence>
<keyword id="KW-0143">Chaperone</keyword>
<keyword id="KW-0963">Cytoplasm</keyword>
<keyword id="KW-0690">Ribosome biogenesis</keyword>
<keyword id="KW-0698">rRNA processing</keyword>
<proteinExistence type="inferred from homology"/>
<reference key="1">
    <citation type="journal article" date="1999" name="Nature">
        <title>Genomic sequence comparison of two unrelated isolates of the human gastric pathogen Helicobacter pylori.</title>
        <authorList>
            <person name="Alm R.A."/>
            <person name="Ling L.-S.L."/>
            <person name="Moir D.T."/>
            <person name="King B.L."/>
            <person name="Brown E.D."/>
            <person name="Doig P.C."/>
            <person name="Smith D.R."/>
            <person name="Noonan B."/>
            <person name="Guild B.C."/>
            <person name="deJonge B.L."/>
            <person name="Carmel G."/>
            <person name="Tummino P.J."/>
            <person name="Caruso A."/>
            <person name="Uria-Nickelsen M."/>
            <person name="Mills D.M."/>
            <person name="Ives C."/>
            <person name="Gibson R."/>
            <person name="Merberg D."/>
            <person name="Mills S.D."/>
            <person name="Jiang Q."/>
            <person name="Taylor D.E."/>
            <person name="Vovis G.F."/>
            <person name="Trust T.J."/>
        </authorList>
    </citation>
    <scope>NUCLEOTIDE SEQUENCE [LARGE SCALE GENOMIC DNA]</scope>
    <source>
        <strain>J99 / ATCC 700824</strain>
    </source>
</reference>
<evidence type="ECO:0000255" key="1">
    <source>
        <dbReference type="HAMAP-Rule" id="MF_00014"/>
    </source>
</evidence>
<protein>
    <recommendedName>
        <fullName evidence="1">Ribosome maturation factor RimM</fullName>
    </recommendedName>
</protein>
<organism>
    <name type="scientific">Helicobacter pylori (strain J99 / ATCC 700824)</name>
    <name type="common">Campylobacter pylori J99</name>
    <dbReference type="NCBI Taxonomy" id="85963"/>
    <lineage>
        <taxon>Bacteria</taxon>
        <taxon>Pseudomonadati</taxon>
        <taxon>Campylobacterota</taxon>
        <taxon>Epsilonproteobacteria</taxon>
        <taxon>Campylobacterales</taxon>
        <taxon>Helicobacteraceae</taxon>
        <taxon>Helicobacter</taxon>
    </lineage>
</organism>
<gene>
    <name evidence="1" type="primary">rimM</name>
    <name type="ordered locus">jhp_1076</name>
</gene>
<dbReference type="EMBL" id="AE001439">
    <property type="protein sequence ID" value="AAD06656.1"/>
    <property type="molecule type" value="Genomic_DNA"/>
</dbReference>
<dbReference type="PIR" id="A71852">
    <property type="entry name" value="A71852"/>
</dbReference>
<dbReference type="RefSeq" id="WP_000927841.1">
    <property type="nucleotide sequence ID" value="NC_000921.1"/>
</dbReference>
<dbReference type="SMR" id="Q9ZK65"/>
<dbReference type="KEGG" id="hpj:jhp_1076"/>
<dbReference type="PATRIC" id="fig|85963.30.peg.1507"/>
<dbReference type="eggNOG" id="COG0806">
    <property type="taxonomic scope" value="Bacteria"/>
</dbReference>
<dbReference type="Proteomes" id="UP000000804">
    <property type="component" value="Chromosome"/>
</dbReference>
<dbReference type="GO" id="GO:0005737">
    <property type="term" value="C:cytoplasm"/>
    <property type="evidence" value="ECO:0007669"/>
    <property type="project" value="UniProtKB-SubCell"/>
</dbReference>
<dbReference type="GO" id="GO:0005840">
    <property type="term" value="C:ribosome"/>
    <property type="evidence" value="ECO:0007669"/>
    <property type="project" value="InterPro"/>
</dbReference>
<dbReference type="GO" id="GO:0043022">
    <property type="term" value="F:ribosome binding"/>
    <property type="evidence" value="ECO:0007669"/>
    <property type="project" value="InterPro"/>
</dbReference>
<dbReference type="GO" id="GO:0042274">
    <property type="term" value="P:ribosomal small subunit biogenesis"/>
    <property type="evidence" value="ECO:0007669"/>
    <property type="project" value="UniProtKB-UniRule"/>
</dbReference>
<dbReference type="GO" id="GO:0006364">
    <property type="term" value="P:rRNA processing"/>
    <property type="evidence" value="ECO:0007669"/>
    <property type="project" value="UniProtKB-UniRule"/>
</dbReference>
<dbReference type="Gene3D" id="2.30.30.240">
    <property type="entry name" value="PRC-barrel domain"/>
    <property type="match status" value="1"/>
</dbReference>
<dbReference type="Gene3D" id="2.40.30.60">
    <property type="entry name" value="RimM"/>
    <property type="match status" value="1"/>
</dbReference>
<dbReference type="HAMAP" id="MF_00014">
    <property type="entry name" value="Ribosome_mat_RimM"/>
    <property type="match status" value="1"/>
</dbReference>
<dbReference type="InterPro" id="IPR027275">
    <property type="entry name" value="PRC-brl_dom"/>
</dbReference>
<dbReference type="InterPro" id="IPR011033">
    <property type="entry name" value="PRC_barrel-like_sf"/>
</dbReference>
<dbReference type="InterPro" id="IPR011961">
    <property type="entry name" value="RimM"/>
</dbReference>
<dbReference type="InterPro" id="IPR002676">
    <property type="entry name" value="RimM_N"/>
</dbReference>
<dbReference type="InterPro" id="IPR036976">
    <property type="entry name" value="RimM_N_sf"/>
</dbReference>
<dbReference type="InterPro" id="IPR009000">
    <property type="entry name" value="Transl_B-barrel_sf"/>
</dbReference>
<dbReference type="NCBIfam" id="TIGR02273">
    <property type="entry name" value="16S_RimM"/>
    <property type="match status" value="1"/>
</dbReference>
<dbReference type="PANTHER" id="PTHR33692">
    <property type="entry name" value="RIBOSOME MATURATION FACTOR RIMM"/>
    <property type="match status" value="1"/>
</dbReference>
<dbReference type="PANTHER" id="PTHR33692:SF1">
    <property type="entry name" value="RIBOSOME MATURATION FACTOR RIMM"/>
    <property type="match status" value="1"/>
</dbReference>
<dbReference type="Pfam" id="PF05239">
    <property type="entry name" value="PRC"/>
    <property type="match status" value="1"/>
</dbReference>
<dbReference type="Pfam" id="PF01782">
    <property type="entry name" value="RimM"/>
    <property type="match status" value="1"/>
</dbReference>
<dbReference type="SUPFAM" id="SSF50346">
    <property type="entry name" value="PRC-barrel domain"/>
    <property type="match status" value="1"/>
</dbReference>
<dbReference type="SUPFAM" id="SSF50447">
    <property type="entry name" value="Translation proteins"/>
    <property type="match status" value="1"/>
</dbReference>
<accession>Q9ZK65</accession>
<comment type="function">
    <text evidence="1">An accessory protein needed during the final step in the assembly of 30S ribosomal subunit, possibly for assembly of the head region. Essential for efficient processing of 16S rRNA. May be needed both before and after RbfA during the maturation of 16S rRNA. It has affinity for free ribosomal 30S subunits but not for 70S ribosomes.</text>
</comment>
<comment type="subunit">
    <text evidence="1">Binds ribosomal protein uS19.</text>
</comment>
<comment type="subcellular location">
    <subcellularLocation>
        <location evidence="1">Cytoplasm</location>
    </subcellularLocation>
</comment>
<comment type="domain">
    <text evidence="1">The PRC barrel domain binds ribosomal protein uS19.</text>
</comment>
<comment type="similarity">
    <text evidence="1">Belongs to the RimM family.</text>
</comment>
<feature type="chain" id="PRO_0000163299" description="Ribosome maturation factor RimM">
    <location>
        <begin position="1"/>
        <end position="181"/>
    </location>
</feature>
<feature type="domain" description="PRC barrel" evidence="1">
    <location>
        <begin position="98"/>
        <end position="177"/>
    </location>
</feature>